<gene>
    <name evidence="1" type="primary">grpE</name>
    <name type="ordered locus">MYPE8960</name>
</gene>
<organism>
    <name type="scientific">Malacoplasma penetrans (strain HF-2)</name>
    <name type="common">Mycoplasma penetrans</name>
    <dbReference type="NCBI Taxonomy" id="272633"/>
    <lineage>
        <taxon>Bacteria</taxon>
        <taxon>Bacillati</taxon>
        <taxon>Mycoplasmatota</taxon>
        <taxon>Mycoplasmoidales</taxon>
        <taxon>Mycoplasmoidaceae</taxon>
        <taxon>Malacoplasma</taxon>
    </lineage>
</organism>
<sequence length="235" mass="27106">MENKNQKHNNEFHEKNQQSQKDNNNVKKENLHEDQSDLNDANFDDGGKKNKLKNDIKKLNHLVDSLKNENNNKQAKIESLERQINLLNENFKSEVIKKASEAQTKLDEKIKEFQAKYETELKHAKKYALKSSAIELIDIVSNFELAVNSKVTNPEIANYLKGFQMFANMFKNYFQQNGITEIPVNLNDDFNAEVMQAFETQKAPNTQPNKVIKIIKKGYKLHDIVLVPATVIVSE</sequence>
<accession>Q8EUM5</accession>
<comment type="function">
    <text evidence="1">Participates actively in the response to hyperosmotic and heat shock by preventing the aggregation of stress-denatured proteins, in association with DnaK and GrpE. It is the nucleotide exchange factor for DnaK and may function as a thermosensor. Unfolded proteins bind initially to DnaJ; upon interaction with the DnaJ-bound protein, DnaK hydrolyzes its bound ATP, resulting in the formation of a stable complex. GrpE releases ADP from DnaK; ATP binding to DnaK triggers the release of the substrate protein, thus completing the reaction cycle. Several rounds of ATP-dependent interactions between DnaJ, DnaK and GrpE are required for fully efficient folding.</text>
</comment>
<comment type="subunit">
    <text evidence="1">Homodimer.</text>
</comment>
<comment type="subcellular location">
    <subcellularLocation>
        <location evidence="1">Cytoplasm</location>
    </subcellularLocation>
</comment>
<comment type="similarity">
    <text evidence="1">Belongs to the GrpE family.</text>
</comment>
<protein>
    <recommendedName>
        <fullName evidence="1">Protein GrpE</fullName>
    </recommendedName>
    <alternativeName>
        <fullName evidence="1">HSP-70 cofactor</fullName>
    </alternativeName>
</protein>
<name>GRPE_MALP2</name>
<reference key="1">
    <citation type="journal article" date="2002" name="Nucleic Acids Res.">
        <title>The complete genomic sequence of Mycoplasma penetrans, an intracellular bacterial pathogen in humans.</title>
        <authorList>
            <person name="Sasaki Y."/>
            <person name="Ishikawa J."/>
            <person name="Yamashita A."/>
            <person name="Oshima K."/>
            <person name="Kenri T."/>
            <person name="Furuya K."/>
            <person name="Yoshino C."/>
            <person name="Horino A."/>
            <person name="Shiba T."/>
            <person name="Sasaki T."/>
            <person name="Hattori M."/>
        </authorList>
    </citation>
    <scope>NUCLEOTIDE SEQUENCE [LARGE SCALE GENOMIC DNA]</scope>
    <source>
        <strain>HF-2</strain>
    </source>
</reference>
<keyword id="KW-0143">Chaperone</keyword>
<keyword id="KW-0963">Cytoplasm</keyword>
<keyword id="KW-1185">Reference proteome</keyword>
<keyword id="KW-0346">Stress response</keyword>
<evidence type="ECO:0000255" key="1">
    <source>
        <dbReference type="HAMAP-Rule" id="MF_01151"/>
    </source>
</evidence>
<evidence type="ECO:0000256" key="2">
    <source>
        <dbReference type="SAM" id="MobiDB-lite"/>
    </source>
</evidence>
<proteinExistence type="inferred from homology"/>
<feature type="chain" id="PRO_0000113820" description="Protein GrpE">
    <location>
        <begin position="1"/>
        <end position="235"/>
    </location>
</feature>
<feature type="region of interest" description="Disordered" evidence="2">
    <location>
        <begin position="1"/>
        <end position="51"/>
    </location>
</feature>
<feature type="compositionally biased region" description="Basic and acidic residues" evidence="2">
    <location>
        <begin position="1"/>
        <end position="16"/>
    </location>
</feature>
<feature type="compositionally biased region" description="Basic and acidic residues" evidence="2">
    <location>
        <begin position="24"/>
        <end position="35"/>
    </location>
</feature>
<dbReference type="EMBL" id="BA000026">
    <property type="protein sequence ID" value="BAC44687.1"/>
    <property type="molecule type" value="Genomic_DNA"/>
</dbReference>
<dbReference type="RefSeq" id="WP_011077716.1">
    <property type="nucleotide sequence ID" value="NC_004432.1"/>
</dbReference>
<dbReference type="SMR" id="Q8EUM5"/>
<dbReference type="FunCoup" id="Q8EUM5">
    <property type="interactions" value="237"/>
</dbReference>
<dbReference type="STRING" id="272633.gene:10732018"/>
<dbReference type="KEGG" id="mpe:MYPE8960"/>
<dbReference type="eggNOG" id="COG0576">
    <property type="taxonomic scope" value="Bacteria"/>
</dbReference>
<dbReference type="HOGENOM" id="CLU_1218010_0_0_14"/>
<dbReference type="InParanoid" id="Q8EUM5"/>
<dbReference type="Proteomes" id="UP000002522">
    <property type="component" value="Chromosome"/>
</dbReference>
<dbReference type="GO" id="GO:0005737">
    <property type="term" value="C:cytoplasm"/>
    <property type="evidence" value="ECO:0007669"/>
    <property type="project" value="UniProtKB-SubCell"/>
</dbReference>
<dbReference type="GO" id="GO:0000774">
    <property type="term" value="F:adenyl-nucleotide exchange factor activity"/>
    <property type="evidence" value="ECO:0007669"/>
    <property type="project" value="InterPro"/>
</dbReference>
<dbReference type="GO" id="GO:0042803">
    <property type="term" value="F:protein homodimerization activity"/>
    <property type="evidence" value="ECO:0007669"/>
    <property type="project" value="InterPro"/>
</dbReference>
<dbReference type="GO" id="GO:0051087">
    <property type="term" value="F:protein-folding chaperone binding"/>
    <property type="evidence" value="ECO:0007669"/>
    <property type="project" value="InterPro"/>
</dbReference>
<dbReference type="GO" id="GO:0051082">
    <property type="term" value="F:unfolded protein binding"/>
    <property type="evidence" value="ECO:0007669"/>
    <property type="project" value="TreeGrafter"/>
</dbReference>
<dbReference type="GO" id="GO:0006457">
    <property type="term" value="P:protein folding"/>
    <property type="evidence" value="ECO:0007669"/>
    <property type="project" value="InterPro"/>
</dbReference>
<dbReference type="CDD" id="cd00446">
    <property type="entry name" value="GrpE"/>
    <property type="match status" value="1"/>
</dbReference>
<dbReference type="Gene3D" id="3.90.20.20">
    <property type="match status" value="1"/>
</dbReference>
<dbReference type="Gene3D" id="2.30.22.10">
    <property type="entry name" value="Head domain of nucleotide exchange factor GrpE"/>
    <property type="match status" value="1"/>
</dbReference>
<dbReference type="HAMAP" id="MF_01151">
    <property type="entry name" value="GrpE"/>
    <property type="match status" value="1"/>
</dbReference>
<dbReference type="InterPro" id="IPR000740">
    <property type="entry name" value="GrpE"/>
</dbReference>
<dbReference type="InterPro" id="IPR013805">
    <property type="entry name" value="GrpE_coiled_coil"/>
</dbReference>
<dbReference type="InterPro" id="IPR009012">
    <property type="entry name" value="GrpE_head"/>
</dbReference>
<dbReference type="PANTHER" id="PTHR21237">
    <property type="entry name" value="GRPE PROTEIN"/>
    <property type="match status" value="1"/>
</dbReference>
<dbReference type="PANTHER" id="PTHR21237:SF23">
    <property type="entry name" value="GRPE PROTEIN HOMOLOG, MITOCHONDRIAL"/>
    <property type="match status" value="1"/>
</dbReference>
<dbReference type="Pfam" id="PF01025">
    <property type="entry name" value="GrpE"/>
    <property type="match status" value="1"/>
</dbReference>
<dbReference type="SUPFAM" id="SSF58014">
    <property type="entry name" value="Coiled-coil domain of nucleotide exchange factor GrpE"/>
    <property type="match status" value="1"/>
</dbReference>
<dbReference type="SUPFAM" id="SSF51064">
    <property type="entry name" value="Head domain of nucleotide exchange factor GrpE"/>
    <property type="match status" value="1"/>
</dbReference>
<dbReference type="PROSITE" id="PS01071">
    <property type="entry name" value="GRPE"/>
    <property type="match status" value="1"/>
</dbReference>